<sequence length="228" mass="24620">MLYGFSGVILQGAIVTLELALSSVVLAVLIGLVGAGAKLSQNRVTGLIFEGYTTLIRGVPDLVLMLLIFYGLQIALNVVTDSLGIDQIDIDPMVAGIITLGFIYGAYFTETFRGAFMAVPKGHIEAATAFGFTHGQTFRRIMFPAMMRYALPGIGNNWQVILKATALVSLLGLEDVVKATQLAGKSTWEPFYFAVVCGLIYLVFTTVSNGVLLLLERRYSVGVKRADL</sequence>
<keyword id="KW-0029">Amino-acid transport</keyword>
<keyword id="KW-0997">Cell inner membrane</keyword>
<keyword id="KW-1003">Cell membrane</keyword>
<keyword id="KW-0472">Membrane</keyword>
<keyword id="KW-1185">Reference proteome</keyword>
<keyword id="KW-0812">Transmembrane</keyword>
<keyword id="KW-1133">Transmembrane helix</keyword>
<keyword id="KW-0813">Transport</keyword>
<evidence type="ECO:0000255" key="1"/>
<evidence type="ECO:0000255" key="2">
    <source>
        <dbReference type="PROSITE-ProRule" id="PRU00441"/>
    </source>
</evidence>
<evidence type="ECO:0000269" key="3">
    <source>
    </source>
</evidence>
<evidence type="ECO:0000269" key="4">
    <source>
    </source>
</evidence>
<evidence type="ECO:0000269" key="5">
    <source>
    </source>
</evidence>
<evidence type="ECO:0000269" key="6">
    <source>
    </source>
</evidence>
<evidence type="ECO:0000269" key="7">
    <source>
    </source>
</evidence>
<evidence type="ECO:0000303" key="8">
    <source>
    </source>
</evidence>
<evidence type="ECO:0000305" key="9"/>
<gene>
    <name evidence="8" type="primary">hisQ</name>
    <name type="ordered locus">STM2353</name>
</gene>
<protein>
    <recommendedName>
        <fullName evidence="9">Histidine/lysine/arginine/ornithine transport system permease protein HisQ</fullName>
    </recommendedName>
</protein>
<name>HISQ_SALTY</name>
<proteinExistence type="evidence at protein level"/>
<reference key="1">
    <citation type="journal article" date="1982" name="Nature">
        <title>Complete nucleotide sequence and identification of membrane components of the histidine transport operon of S. typhimurium.</title>
        <authorList>
            <person name="Higgins C.F."/>
            <person name="Haag P.D."/>
            <person name="Nikaido K."/>
            <person name="Ardeshir F."/>
            <person name="Garcia G."/>
            <person name="Ames G.F.-L."/>
        </authorList>
    </citation>
    <scope>NUCLEOTIDE SEQUENCE [GENOMIC DNA]</scope>
    <scope>FUNCTION</scope>
    <scope>SUBUNIT</scope>
</reference>
<reference key="2">
    <citation type="journal article" date="2001" name="Nature">
        <title>Complete genome sequence of Salmonella enterica serovar Typhimurium LT2.</title>
        <authorList>
            <person name="McClelland M."/>
            <person name="Sanderson K.E."/>
            <person name="Spieth J."/>
            <person name="Clifton S.W."/>
            <person name="Latreille P."/>
            <person name="Courtney L."/>
            <person name="Porwollik S."/>
            <person name="Ali J."/>
            <person name="Dante M."/>
            <person name="Du F."/>
            <person name="Hou S."/>
            <person name="Layman D."/>
            <person name="Leonard S."/>
            <person name="Nguyen C."/>
            <person name="Scott K."/>
            <person name="Holmes A."/>
            <person name="Grewal N."/>
            <person name="Mulvaney E."/>
            <person name="Ryan E."/>
            <person name="Sun H."/>
            <person name="Florea L."/>
            <person name="Miller W."/>
            <person name="Stoneking T."/>
            <person name="Nhan M."/>
            <person name="Waterston R."/>
            <person name="Wilson R.K."/>
        </authorList>
    </citation>
    <scope>NUCLEOTIDE SEQUENCE [LARGE SCALE GENOMIC DNA]</scope>
    <source>
        <strain>LT2 / SGSC1412 / ATCC 700720</strain>
    </source>
</reference>
<reference key="3">
    <citation type="journal article" date="1991" name="J. Biol. Chem.">
        <title>The membrane-bound proteins of periplasmic permeases form a complex. Identification of the histidine permease HisQMP complex.</title>
        <authorList>
            <person name="Kerppola R.E."/>
            <person name="Shyamala V.K."/>
            <person name="Klebba P."/>
            <person name="Ames G.F."/>
        </authorList>
    </citation>
    <scope>SUBUNIT</scope>
    <scope>SUBCELLULAR LOCATION</scope>
</reference>
<reference key="4">
    <citation type="journal article" date="1992" name="J. Biol. Chem.">
        <title>Topology of the hydrophobic membrane-bound components of the histidine periplasmic permease. Comparison with other members of the family.</title>
        <authorList>
            <person name="Kerppola R.E."/>
            <person name="Ames G.F.-L."/>
        </authorList>
    </citation>
    <scope>TOPOLOGY</scope>
    <scope>SUBCELLULAR LOCATION</scope>
</reference>
<reference key="5">
    <citation type="journal article" date="1998" name="Proc. Natl. Acad. Sci. U.S.A.">
        <title>In vitro disassembly and reassembly of an ABC transporter, the histidine permease.</title>
        <authorList>
            <person name="Liu P.Q."/>
            <person name="Ames G.F."/>
        </authorList>
    </citation>
    <scope>FUNCTION</scope>
    <scope>SUBUNIT</scope>
</reference>
<reference key="6">
    <citation type="journal article" date="2014" name="Biochim. Biophys. Acta">
        <title>Conformational changes of the bacterial type I ATP-binding cassette importer HisQMP2 at distinct steps of the catalytic cycle.</title>
        <authorList>
            <person name="Heuveling J."/>
            <person name="Frochaux V."/>
            <person name="Ziomkowska J."/>
            <person name="Wawrzinek R."/>
            <person name="Wessig P."/>
            <person name="Herrmann A."/>
            <person name="Schneider E."/>
        </authorList>
    </citation>
    <scope>FUNCTION</scope>
    <scope>SUBUNIT</scope>
</reference>
<comment type="function">
    <text evidence="5 6 7 9">Part of the ABC transporter complex HisPMQJ involved in histidine transport (PubMed:7050725, PubMed:9520394). Is also part of the ABC transporter complex HisPMQ-ArgT involved in lysine/arginine/ornithine transport (PubMed:24021237). Probably responsible for the translocation of the substrate across the membrane (Probable). Required to relay the ATPase-inducing signal from the solute-binding protein to HisP (PubMed:9520394).</text>
</comment>
<comment type="subunit">
    <text evidence="4 5 6 7">The HisPMQJ complex is composed of two ATP-binding proteins (HisP), two transmembrane proteins (HisM and HisQ) and a solute-binding protein (HisJ) (PubMed:2033074, PubMed:7050725, PubMed:9520394). The HisPMQ-ArgT complex is composed of two ATP-binding proteins (HisP), two transmembrane proteins (HisM and HisQ) and a solute-binding protein (ArgT) (PubMed:24021237).</text>
</comment>
<comment type="subcellular location">
    <subcellularLocation>
        <location evidence="3 4">Cell inner membrane</location>
        <topology evidence="3 4">Multi-pass membrane protein</topology>
    </subcellularLocation>
</comment>
<comment type="similarity">
    <text evidence="9">Belongs to the binding-protein-dependent transport system permease family. HisMQ subfamily.</text>
</comment>
<accession>P0A2I9</accession>
<accession>P02913</accession>
<organism>
    <name type="scientific">Salmonella typhimurium (strain LT2 / SGSC1412 / ATCC 700720)</name>
    <dbReference type="NCBI Taxonomy" id="99287"/>
    <lineage>
        <taxon>Bacteria</taxon>
        <taxon>Pseudomonadati</taxon>
        <taxon>Pseudomonadota</taxon>
        <taxon>Gammaproteobacteria</taxon>
        <taxon>Enterobacterales</taxon>
        <taxon>Enterobacteriaceae</taxon>
        <taxon>Salmonella</taxon>
    </lineage>
</organism>
<feature type="chain" id="PRO_0000060052" description="Histidine/lysine/arginine/ornithine transport system permease protein HisQ">
    <location>
        <begin position="1"/>
        <end position="228"/>
    </location>
</feature>
<feature type="topological domain" description="Periplasmic" evidence="3">
    <location>
        <begin position="1"/>
        <end position="12"/>
    </location>
</feature>
<feature type="transmembrane region" description="Helical" evidence="1">
    <location>
        <begin position="13"/>
        <end position="33"/>
    </location>
</feature>
<feature type="topological domain" description="Cytoplasmic" evidence="3">
    <location>
        <begin position="34"/>
        <end position="58"/>
    </location>
</feature>
<feature type="transmembrane region" description="Helical" evidence="1">
    <location>
        <begin position="59"/>
        <end position="79"/>
    </location>
</feature>
<feature type="topological domain" description="Periplasmic" evidence="3">
    <location>
        <begin position="80"/>
        <end position="87"/>
    </location>
</feature>
<feature type="transmembrane region" description="Helical" evidence="1">
    <location>
        <begin position="88"/>
        <end position="108"/>
    </location>
</feature>
<feature type="topological domain" description="Cytoplasmic" evidence="3">
    <location>
        <begin position="109"/>
        <end position="152"/>
    </location>
</feature>
<feature type="transmembrane region" description="Helical" evidence="1">
    <location>
        <begin position="153"/>
        <end position="173"/>
    </location>
</feature>
<feature type="topological domain" description="Periplasmic" evidence="3">
    <location>
        <begin position="174"/>
        <end position="194"/>
    </location>
</feature>
<feature type="transmembrane region" description="Helical" evidence="1">
    <location>
        <begin position="195"/>
        <end position="215"/>
    </location>
</feature>
<feature type="topological domain" description="Cytoplasmic" evidence="3">
    <location>
        <begin position="216"/>
        <end position="228"/>
    </location>
</feature>
<feature type="domain" description="ABC transmembrane type-1" evidence="2">
    <location>
        <begin position="13"/>
        <end position="212"/>
    </location>
</feature>
<dbReference type="EMBL" id="V01373">
    <property type="protein sequence ID" value="CAA24660.1"/>
    <property type="molecule type" value="Genomic_DNA"/>
</dbReference>
<dbReference type="EMBL" id="J01805">
    <property type="protein sequence ID" value="AAA75579.1"/>
    <property type="molecule type" value="Genomic_DNA"/>
</dbReference>
<dbReference type="EMBL" id="AE006468">
    <property type="protein sequence ID" value="AAL21254.1"/>
    <property type="molecule type" value="Genomic_DNA"/>
</dbReference>
<dbReference type="PIR" id="A03410">
    <property type="entry name" value="MMEBQT"/>
</dbReference>
<dbReference type="RefSeq" id="NP_461295.1">
    <property type="nucleotide sequence ID" value="NC_003197.2"/>
</dbReference>
<dbReference type="RefSeq" id="WP_000965498.1">
    <property type="nucleotide sequence ID" value="NC_003197.2"/>
</dbReference>
<dbReference type="SMR" id="P0A2I9"/>
<dbReference type="STRING" id="99287.STM2353"/>
<dbReference type="TCDB" id="3.A.1.3.1">
    <property type="family name" value="the atp-binding cassette (abc) superfamily"/>
</dbReference>
<dbReference type="PaxDb" id="99287-STM2353"/>
<dbReference type="GeneID" id="1253875"/>
<dbReference type="KEGG" id="stm:STM2353"/>
<dbReference type="PATRIC" id="fig|99287.12.peg.2490"/>
<dbReference type="HOGENOM" id="CLU_019602_1_4_6"/>
<dbReference type="OMA" id="YYILPRQ"/>
<dbReference type="PhylomeDB" id="P0A2I9"/>
<dbReference type="BioCyc" id="SENT99287:STM2353-MONOMER"/>
<dbReference type="Proteomes" id="UP000001014">
    <property type="component" value="Chromosome"/>
</dbReference>
<dbReference type="GO" id="GO:0043190">
    <property type="term" value="C:ATP-binding cassette (ABC) transporter complex"/>
    <property type="evidence" value="ECO:0007669"/>
    <property type="project" value="InterPro"/>
</dbReference>
<dbReference type="GO" id="GO:0005886">
    <property type="term" value="C:plasma membrane"/>
    <property type="evidence" value="ECO:0000318"/>
    <property type="project" value="GO_Central"/>
</dbReference>
<dbReference type="GO" id="GO:0022857">
    <property type="term" value="F:transmembrane transporter activity"/>
    <property type="evidence" value="ECO:0007669"/>
    <property type="project" value="InterPro"/>
</dbReference>
<dbReference type="GO" id="GO:0006865">
    <property type="term" value="P:amino acid transport"/>
    <property type="evidence" value="ECO:0007669"/>
    <property type="project" value="UniProtKB-KW"/>
</dbReference>
<dbReference type="CDD" id="cd06261">
    <property type="entry name" value="TM_PBP2"/>
    <property type="match status" value="1"/>
</dbReference>
<dbReference type="FunFam" id="1.10.3720.10:FF:000020">
    <property type="entry name" value="Histidine ABC transporter permease HisQ"/>
    <property type="match status" value="1"/>
</dbReference>
<dbReference type="Gene3D" id="1.10.3720.10">
    <property type="entry name" value="MetI-like"/>
    <property type="match status" value="1"/>
</dbReference>
<dbReference type="InterPro" id="IPR010065">
    <property type="entry name" value="AA_ABC_transptr_permease_3TM"/>
</dbReference>
<dbReference type="InterPro" id="IPR051613">
    <property type="entry name" value="ABC_transp_permease_HisMQ"/>
</dbReference>
<dbReference type="InterPro" id="IPR000515">
    <property type="entry name" value="MetI-like"/>
</dbReference>
<dbReference type="InterPro" id="IPR035906">
    <property type="entry name" value="MetI-like_sf"/>
</dbReference>
<dbReference type="NCBIfam" id="TIGR01726">
    <property type="entry name" value="HEQRo_perm_3TM"/>
    <property type="match status" value="1"/>
</dbReference>
<dbReference type="NCBIfam" id="NF011714">
    <property type="entry name" value="PRK15135.1"/>
    <property type="match status" value="1"/>
</dbReference>
<dbReference type="PANTHER" id="PTHR30133">
    <property type="entry name" value="CATIONIC AMINO ACID TRANSPORTER, MEMBRANE COMPONENT"/>
    <property type="match status" value="1"/>
</dbReference>
<dbReference type="PANTHER" id="PTHR30133:SF1">
    <property type="entry name" value="HISTIDINE TRANSPORT SYSTEM PERMEASE PROTEIN HISQ"/>
    <property type="match status" value="1"/>
</dbReference>
<dbReference type="Pfam" id="PF00528">
    <property type="entry name" value="BPD_transp_1"/>
    <property type="match status" value="1"/>
</dbReference>
<dbReference type="SUPFAM" id="SSF161098">
    <property type="entry name" value="MetI-like"/>
    <property type="match status" value="1"/>
</dbReference>
<dbReference type="PROSITE" id="PS50928">
    <property type="entry name" value="ABC_TM1"/>
    <property type="match status" value="1"/>
</dbReference>